<evidence type="ECO:0000255" key="1">
    <source>
        <dbReference type="HAMAP-Rule" id="MF_00021"/>
    </source>
</evidence>
<proteinExistence type="inferred from homology"/>
<feature type="chain" id="PRO_1000074219" description="tRNA sulfurtransferase">
    <location>
        <begin position="1"/>
        <end position="482"/>
    </location>
</feature>
<feature type="domain" description="THUMP" evidence="1">
    <location>
        <begin position="61"/>
        <end position="165"/>
    </location>
</feature>
<feature type="domain" description="Rhodanese" evidence="1">
    <location>
        <begin position="404"/>
        <end position="482"/>
    </location>
</feature>
<feature type="active site" description="Cysteine persulfide intermediate" evidence="1">
    <location>
        <position position="456"/>
    </location>
</feature>
<feature type="binding site" evidence="1">
    <location>
        <begin position="183"/>
        <end position="184"/>
    </location>
    <ligand>
        <name>ATP</name>
        <dbReference type="ChEBI" id="CHEBI:30616"/>
    </ligand>
</feature>
<feature type="binding site" evidence="1">
    <location>
        <position position="265"/>
    </location>
    <ligand>
        <name>ATP</name>
        <dbReference type="ChEBI" id="CHEBI:30616"/>
    </ligand>
</feature>
<feature type="binding site" evidence="1">
    <location>
        <position position="287"/>
    </location>
    <ligand>
        <name>ATP</name>
        <dbReference type="ChEBI" id="CHEBI:30616"/>
    </ligand>
</feature>
<feature type="binding site" evidence="1">
    <location>
        <position position="296"/>
    </location>
    <ligand>
        <name>ATP</name>
        <dbReference type="ChEBI" id="CHEBI:30616"/>
    </ligand>
</feature>
<feature type="disulfide bond" description="Redox-active" evidence="1">
    <location>
        <begin position="344"/>
        <end position="456"/>
    </location>
</feature>
<keyword id="KW-0067">ATP-binding</keyword>
<keyword id="KW-0963">Cytoplasm</keyword>
<keyword id="KW-1015">Disulfide bond</keyword>
<keyword id="KW-0547">Nucleotide-binding</keyword>
<keyword id="KW-0676">Redox-active center</keyword>
<keyword id="KW-1185">Reference proteome</keyword>
<keyword id="KW-0694">RNA-binding</keyword>
<keyword id="KW-0784">Thiamine biosynthesis</keyword>
<keyword id="KW-0808">Transferase</keyword>
<keyword id="KW-0820">tRNA-binding</keyword>
<comment type="function">
    <text evidence="1">Catalyzes the ATP-dependent transfer of a sulfur to tRNA to produce 4-thiouridine in position 8 of tRNAs, which functions as a near-UV photosensor. Also catalyzes the transfer of sulfur to the sulfur carrier protein ThiS, forming ThiS-thiocarboxylate. This is a step in the synthesis of thiazole, in the thiamine biosynthesis pathway. The sulfur is donated as persulfide by IscS.</text>
</comment>
<comment type="catalytic activity">
    <reaction evidence="1">
        <text>[ThiI sulfur-carrier protein]-S-sulfanyl-L-cysteine + a uridine in tRNA + 2 reduced [2Fe-2S]-[ferredoxin] + ATP + H(+) = [ThiI sulfur-carrier protein]-L-cysteine + a 4-thiouridine in tRNA + 2 oxidized [2Fe-2S]-[ferredoxin] + AMP + diphosphate</text>
        <dbReference type="Rhea" id="RHEA:24176"/>
        <dbReference type="Rhea" id="RHEA-COMP:10000"/>
        <dbReference type="Rhea" id="RHEA-COMP:10001"/>
        <dbReference type="Rhea" id="RHEA-COMP:13337"/>
        <dbReference type="Rhea" id="RHEA-COMP:13338"/>
        <dbReference type="Rhea" id="RHEA-COMP:13339"/>
        <dbReference type="Rhea" id="RHEA-COMP:13340"/>
        <dbReference type="ChEBI" id="CHEBI:15378"/>
        <dbReference type="ChEBI" id="CHEBI:29950"/>
        <dbReference type="ChEBI" id="CHEBI:30616"/>
        <dbReference type="ChEBI" id="CHEBI:33019"/>
        <dbReference type="ChEBI" id="CHEBI:33737"/>
        <dbReference type="ChEBI" id="CHEBI:33738"/>
        <dbReference type="ChEBI" id="CHEBI:61963"/>
        <dbReference type="ChEBI" id="CHEBI:65315"/>
        <dbReference type="ChEBI" id="CHEBI:136798"/>
        <dbReference type="ChEBI" id="CHEBI:456215"/>
        <dbReference type="EC" id="2.8.1.4"/>
    </reaction>
</comment>
<comment type="catalytic activity">
    <reaction evidence="1">
        <text>[ThiS sulfur-carrier protein]-C-terminal Gly-Gly-AMP + S-sulfanyl-L-cysteinyl-[cysteine desulfurase] + AH2 = [ThiS sulfur-carrier protein]-C-terminal-Gly-aminoethanethioate + L-cysteinyl-[cysteine desulfurase] + A + AMP + 2 H(+)</text>
        <dbReference type="Rhea" id="RHEA:43340"/>
        <dbReference type="Rhea" id="RHEA-COMP:12157"/>
        <dbReference type="Rhea" id="RHEA-COMP:12158"/>
        <dbReference type="Rhea" id="RHEA-COMP:12910"/>
        <dbReference type="Rhea" id="RHEA-COMP:19908"/>
        <dbReference type="ChEBI" id="CHEBI:13193"/>
        <dbReference type="ChEBI" id="CHEBI:15378"/>
        <dbReference type="ChEBI" id="CHEBI:17499"/>
        <dbReference type="ChEBI" id="CHEBI:29950"/>
        <dbReference type="ChEBI" id="CHEBI:61963"/>
        <dbReference type="ChEBI" id="CHEBI:90618"/>
        <dbReference type="ChEBI" id="CHEBI:232372"/>
        <dbReference type="ChEBI" id="CHEBI:456215"/>
    </reaction>
</comment>
<comment type="pathway">
    <text evidence="1">Cofactor biosynthesis; thiamine diphosphate biosynthesis.</text>
</comment>
<comment type="subcellular location">
    <subcellularLocation>
        <location evidence="1">Cytoplasm</location>
    </subcellularLocation>
</comment>
<comment type="similarity">
    <text evidence="1">Belongs to the ThiI family.</text>
</comment>
<protein>
    <recommendedName>
        <fullName evidence="1">tRNA sulfurtransferase</fullName>
        <ecNumber evidence="1">2.8.1.4</ecNumber>
    </recommendedName>
    <alternativeName>
        <fullName evidence="1">Sulfur carrier protein ThiS sulfurtransferase</fullName>
    </alternativeName>
    <alternativeName>
        <fullName evidence="1">Thiamine biosynthesis protein ThiI</fullName>
    </alternativeName>
    <alternativeName>
        <fullName evidence="1">tRNA 4-thiouridine synthase</fullName>
    </alternativeName>
</protein>
<dbReference type="EC" id="2.8.1.4" evidence="1"/>
<dbReference type="EMBL" id="CP000800">
    <property type="protein sequence ID" value="ABV18689.1"/>
    <property type="molecule type" value="Genomic_DNA"/>
</dbReference>
<dbReference type="RefSeq" id="WP_000668677.1">
    <property type="nucleotide sequence ID" value="NC_009801.1"/>
</dbReference>
<dbReference type="SMR" id="A7ZIH7"/>
<dbReference type="GeneID" id="75202845"/>
<dbReference type="KEGG" id="ecw:EcE24377A_0455"/>
<dbReference type="HOGENOM" id="CLU_037952_4_1_6"/>
<dbReference type="UniPathway" id="UPA00060"/>
<dbReference type="Proteomes" id="UP000001122">
    <property type="component" value="Chromosome"/>
</dbReference>
<dbReference type="GO" id="GO:0005829">
    <property type="term" value="C:cytosol"/>
    <property type="evidence" value="ECO:0007669"/>
    <property type="project" value="TreeGrafter"/>
</dbReference>
<dbReference type="GO" id="GO:0005524">
    <property type="term" value="F:ATP binding"/>
    <property type="evidence" value="ECO:0007669"/>
    <property type="project" value="UniProtKB-UniRule"/>
</dbReference>
<dbReference type="GO" id="GO:0004810">
    <property type="term" value="F:CCA tRNA nucleotidyltransferase activity"/>
    <property type="evidence" value="ECO:0007669"/>
    <property type="project" value="InterPro"/>
</dbReference>
<dbReference type="GO" id="GO:0000049">
    <property type="term" value="F:tRNA binding"/>
    <property type="evidence" value="ECO:0007669"/>
    <property type="project" value="UniProtKB-UniRule"/>
</dbReference>
<dbReference type="GO" id="GO:0140741">
    <property type="term" value="F:tRNA-uracil-4 sulfurtransferase activity"/>
    <property type="evidence" value="ECO:0007669"/>
    <property type="project" value="UniProtKB-EC"/>
</dbReference>
<dbReference type="GO" id="GO:0009228">
    <property type="term" value="P:thiamine biosynthetic process"/>
    <property type="evidence" value="ECO:0007669"/>
    <property type="project" value="UniProtKB-KW"/>
</dbReference>
<dbReference type="GO" id="GO:0009229">
    <property type="term" value="P:thiamine diphosphate biosynthetic process"/>
    <property type="evidence" value="ECO:0007669"/>
    <property type="project" value="UniProtKB-UniRule"/>
</dbReference>
<dbReference type="GO" id="GO:0052837">
    <property type="term" value="P:thiazole biosynthetic process"/>
    <property type="evidence" value="ECO:0007669"/>
    <property type="project" value="InterPro"/>
</dbReference>
<dbReference type="GO" id="GO:0002937">
    <property type="term" value="P:tRNA 4-thiouridine biosynthesis"/>
    <property type="evidence" value="ECO:0007669"/>
    <property type="project" value="TreeGrafter"/>
</dbReference>
<dbReference type="CDD" id="cd01712">
    <property type="entry name" value="PPase_ThiI"/>
    <property type="match status" value="1"/>
</dbReference>
<dbReference type="CDD" id="cd00158">
    <property type="entry name" value="RHOD"/>
    <property type="match status" value="1"/>
</dbReference>
<dbReference type="CDD" id="cd11716">
    <property type="entry name" value="THUMP_ThiI"/>
    <property type="match status" value="1"/>
</dbReference>
<dbReference type="FunFam" id="3.30.2130.30:FF:000002">
    <property type="entry name" value="tRNA sulfurtransferase"/>
    <property type="match status" value="1"/>
</dbReference>
<dbReference type="FunFam" id="3.40.250.10:FF:000003">
    <property type="entry name" value="tRNA sulfurtransferase"/>
    <property type="match status" value="1"/>
</dbReference>
<dbReference type="FunFam" id="3.40.50.620:FF:000029">
    <property type="entry name" value="tRNA sulfurtransferase"/>
    <property type="match status" value="1"/>
</dbReference>
<dbReference type="Gene3D" id="3.30.2130.30">
    <property type="match status" value="1"/>
</dbReference>
<dbReference type="Gene3D" id="3.40.50.620">
    <property type="entry name" value="HUPs"/>
    <property type="match status" value="1"/>
</dbReference>
<dbReference type="Gene3D" id="3.40.250.10">
    <property type="entry name" value="Rhodanese-like domain"/>
    <property type="match status" value="1"/>
</dbReference>
<dbReference type="HAMAP" id="MF_00021">
    <property type="entry name" value="ThiI"/>
    <property type="match status" value="1"/>
</dbReference>
<dbReference type="InterPro" id="IPR001763">
    <property type="entry name" value="Rhodanese-like_dom"/>
</dbReference>
<dbReference type="InterPro" id="IPR036873">
    <property type="entry name" value="Rhodanese-like_dom_sf"/>
</dbReference>
<dbReference type="InterPro" id="IPR014729">
    <property type="entry name" value="Rossmann-like_a/b/a_fold"/>
</dbReference>
<dbReference type="InterPro" id="IPR020536">
    <property type="entry name" value="ThiI_AANH"/>
</dbReference>
<dbReference type="InterPro" id="IPR054173">
    <property type="entry name" value="ThiI_fer"/>
</dbReference>
<dbReference type="InterPro" id="IPR049961">
    <property type="entry name" value="ThiI_N"/>
</dbReference>
<dbReference type="InterPro" id="IPR026340">
    <property type="entry name" value="THII_Thiazole_biosynth_dom"/>
</dbReference>
<dbReference type="InterPro" id="IPR004114">
    <property type="entry name" value="THUMP_dom"/>
</dbReference>
<dbReference type="InterPro" id="IPR049962">
    <property type="entry name" value="THUMP_ThiI"/>
</dbReference>
<dbReference type="InterPro" id="IPR003720">
    <property type="entry name" value="tRNA_STrfase"/>
</dbReference>
<dbReference type="InterPro" id="IPR050102">
    <property type="entry name" value="tRNA_sulfurtransferase_ThiI"/>
</dbReference>
<dbReference type="NCBIfam" id="TIGR04271">
    <property type="entry name" value="ThiI_C_thiazole"/>
    <property type="match status" value="1"/>
</dbReference>
<dbReference type="NCBIfam" id="TIGR00342">
    <property type="entry name" value="tRNA uracil 4-sulfurtransferase ThiI"/>
    <property type="match status" value="1"/>
</dbReference>
<dbReference type="PANTHER" id="PTHR43209">
    <property type="entry name" value="TRNA SULFURTRANSFERASE"/>
    <property type="match status" value="1"/>
</dbReference>
<dbReference type="PANTHER" id="PTHR43209:SF1">
    <property type="entry name" value="TRNA SULFURTRANSFERASE"/>
    <property type="match status" value="1"/>
</dbReference>
<dbReference type="Pfam" id="PF02568">
    <property type="entry name" value="ThiI"/>
    <property type="match status" value="1"/>
</dbReference>
<dbReference type="Pfam" id="PF22025">
    <property type="entry name" value="ThiI_fer"/>
    <property type="match status" value="1"/>
</dbReference>
<dbReference type="Pfam" id="PF02926">
    <property type="entry name" value="THUMP"/>
    <property type="match status" value="1"/>
</dbReference>
<dbReference type="SMART" id="SM00981">
    <property type="entry name" value="THUMP"/>
    <property type="match status" value="1"/>
</dbReference>
<dbReference type="SUPFAM" id="SSF52402">
    <property type="entry name" value="Adenine nucleotide alpha hydrolases-like"/>
    <property type="match status" value="1"/>
</dbReference>
<dbReference type="SUPFAM" id="SSF52821">
    <property type="entry name" value="Rhodanese/Cell cycle control phosphatase"/>
    <property type="match status" value="1"/>
</dbReference>
<dbReference type="SUPFAM" id="SSF143437">
    <property type="entry name" value="THUMP domain-like"/>
    <property type="match status" value="1"/>
</dbReference>
<dbReference type="PROSITE" id="PS50206">
    <property type="entry name" value="RHODANESE_3"/>
    <property type="match status" value="1"/>
</dbReference>
<dbReference type="PROSITE" id="PS51165">
    <property type="entry name" value="THUMP"/>
    <property type="match status" value="1"/>
</dbReference>
<gene>
    <name evidence="1" type="primary">thiI</name>
    <name type="ordered locus">EcE24377A_0455</name>
</gene>
<name>THII_ECO24</name>
<reference key="1">
    <citation type="journal article" date="2008" name="J. Bacteriol.">
        <title>The pangenome structure of Escherichia coli: comparative genomic analysis of E. coli commensal and pathogenic isolates.</title>
        <authorList>
            <person name="Rasko D.A."/>
            <person name="Rosovitz M.J."/>
            <person name="Myers G.S.A."/>
            <person name="Mongodin E.F."/>
            <person name="Fricke W.F."/>
            <person name="Gajer P."/>
            <person name="Crabtree J."/>
            <person name="Sebaihia M."/>
            <person name="Thomson N.R."/>
            <person name="Chaudhuri R."/>
            <person name="Henderson I.R."/>
            <person name="Sperandio V."/>
            <person name="Ravel J."/>
        </authorList>
    </citation>
    <scope>NUCLEOTIDE SEQUENCE [LARGE SCALE GENOMIC DNA]</scope>
    <source>
        <strain>E24377A / ETEC</strain>
    </source>
</reference>
<accession>A7ZIH7</accession>
<sequence length="482" mass="54987">MKFIIKLFPEITIKSQSVRLRFIKILTGNIRNVLKHYDETLAVVRHWDNIEVRAKDENQRLAIRDALTRIPGIHHILEVEDVPFTDMHDIFEKALVQYRDQLEGKTFCVRVKRRGKHDFSSIDVERYVGGGLNQHIESARVKLTNPEVTVHLEVEDDRLLLIKGRYEGIGGFPIGTQEDVLSLISGGFDSGVSSYMLMRRGCRVHYCFFNLGGAAHEIGVRQVAHYLWNRFGSSHRVRFVAINFEPVVGEILEKIDDGQMGVILKRMMVRAASKVAERYGVQALVTGEALGQVSSQTLTNLRLIDNVSDTLILRPLISYDKEHIINLARQIGTEDFARTMPEYCGVISKSPTVKAAKSKIEAEEEKFDFSILDKVVEEANNVDIREIAQQTEQEVVEVETVNGFGPNDVILDIRSIDEQEDKPLKVEGIDVVSLPFYKLSTKFGDLDQNRTWLLWCERGVMSRLQALYLREQGFNNVKVYRP</sequence>
<organism>
    <name type="scientific">Escherichia coli O139:H28 (strain E24377A / ETEC)</name>
    <dbReference type="NCBI Taxonomy" id="331111"/>
    <lineage>
        <taxon>Bacteria</taxon>
        <taxon>Pseudomonadati</taxon>
        <taxon>Pseudomonadota</taxon>
        <taxon>Gammaproteobacteria</taxon>
        <taxon>Enterobacterales</taxon>
        <taxon>Enterobacteriaceae</taxon>
        <taxon>Escherichia</taxon>
    </lineage>
</organism>